<reference key="1">
    <citation type="journal article" date="2008" name="Environ. Microbiol.">
        <title>The genome of Erwinia tasmaniensis strain Et1/99, a non-pathogenic bacterium in the genus Erwinia.</title>
        <authorList>
            <person name="Kube M."/>
            <person name="Migdoll A.M."/>
            <person name="Mueller I."/>
            <person name="Kuhl H."/>
            <person name="Beck A."/>
            <person name="Reinhardt R."/>
            <person name="Geider K."/>
        </authorList>
    </citation>
    <scope>NUCLEOTIDE SEQUENCE [LARGE SCALE GENOMIC DNA]</scope>
    <source>
        <strain>DSM 17950 / CFBP 7177 / CIP 109463 / NCPPB 4357 / Et1/99</strain>
    </source>
</reference>
<proteinExistence type="inferred from homology"/>
<comment type="function">
    <text evidence="1">Removes 5-oxoproline from various penultimate amino acid residues except L-proline.</text>
</comment>
<comment type="catalytic activity">
    <reaction evidence="1">
        <text>Release of an N-terminal pyroglutamyl group from a polypeptide, the second amino acid generally not being Pro.</text>
        <dbReference type="EC" id="3.4.19.3"/>
    </reaction>
</comment>
<comment type="subunit">
    <text evidence="1">Homotetramer.</text>
</comment>
<comment type="subcellular location">
    <subcellularLocation>
        <location evidence="1">Cytoplasm</location>
    </subcellularLocation>
</comment>
<comment type="similarity">
    <text evidence="1">Belongs to the peptidase C15 family.</text>
</comment>
<sequence>MKKVLITAFEPFDGERINPSWEAVSRLHNRLIGGAEIVAKRLPCAFGTSLEVLYATIDAVKPDLVIAVGQAGGRADMSIERVAINVDDARIPDNAGAQPIDEPVLSGGPAALFSTLPIKALVAGIREAGIPASVSQTAGTFVCNHVMYGLLHYLRRRKARGGFIHIPYLPEQAINHPGAPSMALATVILALEMAVSISLAVEEDMRLAGGATH</sequence>
<keyword id="KW-0963">Cytoplasm</keyword>
<keyword id="KW-0378">Hydrolase</keyword>
<keyword id="KW-0645">Protease</keyword>
<keyword id="KW-1185">Reference proteome</keyword>
<keyword id="KW-0788">Thiol protease</keyword>
<name>PCP_ERWT9</name>
<protein>
    <recommendedName>
        <fullName evidence="1">Pyrrolidone-carboxylate peptidase</fullName>
        <ecNumber evidence="1">3.4.19.3</ecNumber>
    </recommendedName>
    <alternativeName>
        <fullName evidence="1">5-oxoprolyl-peptidase</fullName>
    </alternativeName>
    <alternativeName>
        <fullName evidence="1">Pyroglutamyl-peptidase I</fullName>
        <shortName evidence="1">PGP-I</shortName>
        <shortName evidence="1">Pyrase</shortName>
    </alternativeName>
</protein>
<gene>
    <name evidence="1" type="primary">pcp</name>
    <name type="ordered locus">ETA_23110</name>
</gene>
<evidence type="ECO:0000255" key="1">
    <source>
        <dbReference type="HAMAP-Rule" id="MF_00417"/>
    </source>
</evidence>
<feature type="chain" id="PRO_1000123995" description="Pyrrolidone-carboxylate peptidase">
    <location>
        <begin position="1"/>
        <end position="213"/>
    </location>
</feature>
<feature type="active site" evidence="1">
    <location>
        <position position="80"/>
    </location>
</feature>
<feature type="active site" evidence="1">
    <location>
        <position position="143"/>
    </location>
</feature>
<feature type="active site" evidence="1">
    <location>
        <position position="165"/>
    </location>
</feature>
<dbReference type="EC" id="3.4.19.3" evidence="1"/>
<dbReference type="EMBL" id="CU468135">
    <property type="protein sequence ID" value="CAO97357.1"/>
    <property type="molecule type" value="Genomic_DNA"/>
</dbReference>
<dbReference type="RefSeq" id="WP_012442026.1">
    <property type="nucleotide sequence ID" value="NC_010694.1"/>
</dbReference>
<dbReference type="SMR" id="B2VBP1"/>
<dbReference type="STRING" id="465817.ETA_23110"/>
<dbReference type="MEROPS" id="C15.001"/>
<dbReference type="KEGG" id="eta:ETA_23110"/>
<dbReference type="eggNOG" id="COG2039">
    <property type="taxonomic scope" value="Bacteria"/>
</dbReference>
<dbReference type="HOGENOM" id="CLU_043960_4_0_6"/>
<dbReference type="OrthoDB" id="9779738at2"/>
<dbReference type="Proteomes" id="UP000001726">
    <property type="component" value="Chromosome"/>
</dbReference>
<dbReference type="GO" id="GO:0005829">
    <property type="term" value="C:cytosol"/>
    <property type="evidence" value="ECO:0007669"/>
    <property type="project" value="InterPro"/>
</dbReference>
<dbReference type="GO" id="GO:0016920">
    <property type="term" value="F:pyroglutamyl-peptidase activity"/>
    <property type="evidence" value="ECO:0007669"/>
    <property type="project" value="UniProtKB-UniRule"/>
</dbReference>
<dbReference type="GO" id="GO:0006508">
    <property type="term" value="P:proteolysis"/>
    <property type="evidence" value="ECO:0007669"/>
    <property type="project" value="UniProtKB-KW"/>
</dbReference>
<dbReference type="CDD" id="cd00501">
    <property type="entry name" value="Peptidase_C15"/>
    <property type="match status" value="1"/>
</dbReference>
<dbReference type="FunFam" id="3.40.630.20:FF:000001">
    <property type="entry name" value="Pyrrolidone-carboxylate peptidase"/>
    <property type="match status" value="1"/>
</dbReference>
<dbReference type="Gene3D" id="3.40.630.20">
    <property type="entry name" value="Peptidase C15, pyroglutamyl peptidase I-like"/>
    <property type="match status" value="1"/>
</dbReference>
<dbReference type="HAMAP" id="MF_00417">
    <property type="entry name" value="Pyrrolid_peptidase"/>
    <property type="match status" value="1"/>
</dbReference>
<dbReference type="InterPro" id="IPR000816">
    <property type="entry name" value="Peptidase_C15"/>
</dbReference>
<dbReference type="InterPro" id="IPR016125">
    <property type="entry name" value="Peptidase_C15-like"/>
</dbReference>
<dbReference type="InterPro" id="IPR036440">
    <property type="entry name" value="Peptidase_C15-like_sf"/>
</dbReference>
<dbReference type="InterPro" id="IPR029762">
    <property type="entry name" value="PGP-I_bact-type"/>
</dbReference>
<dbReference type="InterPro" id="IPR033694">
    <property type="entry name" value="PGPEP1_Cys_AS"/>
</dbReference>
<dbReference type="NCBIfam" id="NF009676">
    <property type="entry name" value="PRK13197.1"/>
    <property type="match status" value="1"/>
</dbReference>
<dbReference type="NCBIfam" id="TIGR00504">
    <property type="entry name" value="pyro_pdase"/>
    <property type="match status" value="1"/>
</dbReference>
<dbReference type="PANTHER" id="PTHR23402">
    <property type="entry name" value="PROTEASE FAMILY C15 PYROGLUTAMYL-PEPTIDASE I-RELATED"/>
    <property type="match status" value="1"/>
</dbReference>
<dbReference type="PANTHER" id="PTHR23402:SF1">
    <property type="entry name" value="PYROGLUTAMYL-PEPTIDASE I"/>
    <property type="match status" value="1"/>
</dbReference>
<dbReference type="Pfam" id="PF01470">
    <property type="entry name" value="Peptidase_C15"/>
    <property type="match status" value="1"/>
</dbReference>
<dbReference type="PIRSF" id="PIRSF015592">
    <property type="entry name" value="Prld-crbxl_pptds"/>
    <property type="match status" value="1"/>
</dbReference>
<dbReference type="PRINTS" id="PR00706">
    <property type="entry name" value="PYROGLUPTASE"/>
</dbReference>
<dbReference type="SUPFAM" id="SSF53182">
    <property type="entry name" value="Pyrrolidone carboxyl peptidase (pyroglutamate aminopeptidase)"/>
    <property type="match status" value="1"/>
</dbReference>
<dbReference type="PROSITE" id="PS01334">
    <property type="entry name" value="PYRASE_CYS"/>
    <property type="match status" value="1"/>
</dbReference>
<organism>
    <name type="scientific">Erwinia tasmaniensis (strain DSM 17950 / CFBP 7177 / CIP 109463 / NCPPB 4357 / Et1/99)</name>
    <dbReference type="NCBI Taxonomy" id="465817"/>
    <lineage>
        <taxon>Bacteria</taxon>
        <taxon>Pseudomonadati</taxon>
        <taxon>Pseudomonadota</taxon>
        <taxon>Gammaproteobacteria</taxon>
        <taxon>Enterobacterales</taxon>
        <taxon>Erwiniaceae</taxon>
        <taxon>Erwinia</taxon>
    </lineage>
</organism>
<accession>B2VBP1</accession>